<sequence>MLGNLGRSLSKTMKKLAGMTIVDEEVVREVIKDIQRALIQSDVNIKLVFNLSKSIEERALNEEPPKGITPKEHIISIVYDEMVKLLGEKSHELVIDDKPYRILFLGLQGSGKTTTIGKLARYLRKKGFTVGVVCTDTWRPAALEQLKQYTEGQDVSIYGDPQNRDALDLAEKGLARFQKKDVIIFDTAGRHKEEKDLLREMEELSAIVEPHEAILVIDGTIGQQAREQALAFRKATDIGSIIVTKLDGSAKGGGALSAVAEIGAPIKFIGTGERIDDLEVFDPERFISRLLGMGDLRSLLEKVEEVSEEEIAEESLDAILSGKFTLRDMRVQFEMMGKMGPLQQVMSMLPGAGKLPKDASRMTEETIRKYLIIMDSMTEEELEKPDIIKHSRIRRIARGSGTRNEDVKELLKYYRVTKKAMKGLGRRKMGGPMGQLMRQFMR</sequence>
<keyword id="KW-0963">Cytoplasm</keyword>
<keyword id="KW-0342">GTP-binding</keyword>
<keyword id="KW-0378">Hydrolase</keyword>
<keyword id="KW-0547">Nucleotide-binding</keyword>
<keyword id="KW-1185">Reference proteome</keyword>
<keyword id="KW-0687">Ribonucleoprotein</keyword>
<keyword id="KW-0694">RNA-binding</keyword>
<keyword id="KW-0733">Signal recognition particle</keyword>
<proteinExistence type="inferred from homology"/>
<evidence type="ECO:0000255" key="1">
    <source>
        <dbReference type="HAMAP-Rule" id="MF_00306"/>
    </source>
</evidence>
<feature type="chain" id="PRO_0000101180" description="Signal recognition particle 54 kDa protein">
    <location>
        <begin position="1"/>
        <end position="442"/>
    </location>
</feature>
<feature type="binding site" evidence="1">
    <location>
        <begin position="106"/>
        <end position="113"/>
    </location>
    <ligand>
        <name>GTP</name>
        <dbReference type="ChEBI" id="CHEBI:37565"/>
    </ligand>
</feature>
<feature type="binding site" evidence="1">
    <location>
        <begin position="186"/>
        <end position="190"/>
    </location>
    <ligand>
        <name>GTP</name>
        <dbReference type="ChEBI" id="CHEBI:37565"/>
    </ligand>
</feature>
<feature type="binding site" evidence="1">
    <location>
        <begin position="244"/>
        <end position="247"/>
    </location>
    <ligand>
        <name>GTP</name>
        <dbReference type="ChEBI" id="CHEBI:37565"/>
    </ligand>
</feature>
<dbReference type="EC" id="3.6.5.4" evidence="1"/>
<dbReference type="EMBL" id="AE000666">
    <property type="protein sequence ID" value="AAB85799.1"/>
    <property type="molecule type" value="Genomic_DNA"/>
</dbReference>
<dbReference type="PIR" id="F69042">
    <property type="entry name" value="F69042"/>
</dbReference>
<dbReference type="RefSeq" id="WP_010876934.1">
    <property type="nucleotide sequence ID" value="NC_000916.1"/>
</dbReference>
<dbReference type="SMR" id="O27376"/>
<dbReference type="FunCoup" id="O27376">
    <property type="interactions" value="161"/>
</dbReference>
<dbReference type="STRING" id="187420.MTH_1321"/>
<dbReference type="PaxDb" id="187420-MTH_1321"/>
<dbReference type="EnsemblBacteria" id="AAB85799">
    <property type="protein sequence ID" value="AAB85799"/>
    <property type="gene ID" value="MTH_1321"/>
</dbReference>
<dbReference type="GeneID" id="1471038"/>
<dbReference type="KEGG" id="mth:MTH_1321"/>
<dbReference type="PATRIC" id="fig|187420.15.peg.1290"/>
<dbReference type="HOGENOM" id="CLU_009301_6_0_2"/>
<dbReference type="InParanoid" id="O27376"/>
<dbReference type="Proteomes" id="UP000005223">
    <property type="component" value="Chromosome"/>
</dbReference>
<dbReference type="GO" id="GO:0048500">
    <property type="term" value="C:signal recognition particle"/>
    <property type="evidence" value="ECO:0007669"/>
    <property type="project" value="UniProtKB-UniRule"/>
</dbReference>
<dbReference type="GO" id="GO:0008312">
    <property type="term" value="F:7S RNA binding"/>
    <property type="evidence" value="ECO:0007669"/>
    <property type="project" value="UniProtKB-UniRule"/>
</dbReference>
<dbReference type="GO" id="GO:0016887">
    <property type="term" value="F:ATP hydrolysis activity"/>
    <property type="evidence" value="ECO:0007669"/>
    <property type="project" value="InterPro"/>
</dbReference>
<dbReference type="GO" id="GO:0005525">
    <property type="term" value="F:GTP binding"/>
    <property type="evidence" value="ECO:0007669"/>
    <property type="project" value="UniProtKB-UniRule"/>
</dbReference>
<dbReference type="GO" id="GO:0003924">
    <property type="term" value="F:GTPase activity"/>
    <property type="evidence" value="ECO:0007669"/>
    <property type="project" value="UniProtKB-UniRule"/>
</dbReference>
<dbReference type="GO" id="GO:0006614">
    <property type="term" value="P:SRP-dependent cotranslational protein targeting to membrane"/>
    <property type="evidence" value="ECO:0007669"/>
    <property type="project" value="InterPro"/>
</dbReference>
<dbReference type="CDD" id="cd17875">
    <property type="entry name" value="SRP54_G"/>
    <property type="match status" value="1"/>
</dbReference>
<dbReference type="FunFam" id="3.40.50.300:FF:000022">
    <property type="entry name" value="Signal recognition particle 54 kDa subunit"/>
    <property type="match status" value="1"/>
</dbReference>
<dbReference type="Gene3D" id="3.40.50.300">
    <property type="entry name" value="P-loop containing nucleotide triphosphate hydrolases"/>
    <property type="match status" value="1"/>
</dbReference>
<dbReference type="Gene3D" id="1.20.120.140">
    <property type="entry name" value="Signal recognition particle SRP54, nucleotide-binding domain"/>
    <property type="match status" value="1"/>
</dbReference>
<dbReference type="Gene3D" id="1.10.260.30">
    <property type="entry name" value="Signal recognition particle, SRP54 subunit, M-domain"/>
    <property type="match status" value="1"/>
</dbReference>
<dbReference type="HAMAP" id="MF_00306">
    <property type="entry name" value="SRP54"/>
    <property type="match status" value="1"/>
</dbReference>
<dbReference type="InterPro" id="IPR003593">
    <property type="entry name" value="AAA+_ATPase"/>
</dbReference>
<dbReference type="InterPro" id="IPR027417">
    <property type="entry name" value="P-loop_NTPase"/>
</dbReference>
<dbReference type="InterPro" id="IPR036891">
    <property type="entry name" value="Signal_recog_part_SRP54_M_sf"/>
</dbReference>
<dbReference type="InterPro" id="IPR013822">
    <property type="entry name" value="Signal_recog_particl_SRP54_hlx"/>
</dbReference>
<dbReference type="InterPro" id="IPR004125">
    <property type="entry name" value="Signal_recog_particle_SRP54_M"/>
</dbReference>
<dbReference type="InterPro" id="IPR036225">
    <property type="entry name" value="SRP/SRP_N"/>
</dbReference>
<dbReference type="InterPro" id="IPR022941">
    <property type="entry name" value="SRP54"/>
</dbReference>
<dbReference type="InterPro" id="IPR000897">
    <property type="entry name" value="SRP54_GTPase_dom"/>
</dbReference>
<dbReference type="InterPro" id="IPR042101">
    <property type="entry name" value="SRP54_N_sf"/>
</dbReference>
<dbReference type="PANTHER" id="PTHR11564">
    <property type="entry name" value="SIGNAL RECOGNITION PARTICLE 54K PROTEIN SRP54"/>
    <property type="match status" value="1"/>
</dbReference>
<dbReference type="PANTHER" id="PTHR11564:SF5">
    <property type="entry name" value="SIGNAL RECOGNITION PARTICLE SUBUNIT SRP54"/>
    <property type="match status" value="1"/>
</dbReference>
<dbReference type="Pfam" id="PF00448">
    <property type="entry name" value="SRP54"/>
    <property type="match status" value="1"/>
</dbReference>
<dbReference type="Pfam" id="PF02881">
    <property type="entry name" value="SRP54_N"/>
    <property type="match status" value="1"/>
</dbReference>
<dbReference type="Pfam" id="PF02978">
    <property type="entry name" value="SRP_SPB"/>
    <property type="match status" value="1"/>
</dbReference>
<dbReference type="SMART" id="SM00382">
    <property type="entry name" value="AAA"/>
    <property type="match status" value="1"/>
</dbReference>
<dbReference type="SMART" id="SM00962">
    <property type="entry name" value="SRP54"/>
    <property type="match status" value="1"/>
</dbReference>
<dbReference type="SMART" id="SM00963">
    <property type="entry name" value="SRP54_N"/>
    <property type="match status" value="1"/>
</dbReference>
<dbReference type="SUPFAM" id="SSF47364">
    <property type="entry name" value="Domain of the SRP/SRP receptor G-proteins"/>
    <property type="match status" value="1"/>
</dbReference>
<dbReference type="SUPFAM" id="SSF52540">
    <property type="entry name" value="P-loop containing nucleoside triphosphate hydrolases"/>
    <property type="match status" value="1"/>
</dbReference>
<dbReference type="SUPFAM" id="SSF47446">
    <property type="entry name" value="Signal peptide-binding domain"/>
    <property type="match status" value="1"/>
</dbReference>
<dbReference type="PROSITE" id="PS00300">
    <property type="entry name" value="SRP54"/>
    <property type="match status" value="1"/>
</dbReference>
<gene>
    <name evidence="1" type="primary">srp54</name>
    <name type="ordered locus">MTH_1321</name>
</gene>
<accession>O27376</accession>
<reference key="1">
    <citation type="journal article" date="1997" name="J. Bacteriol.">
        <title>Complete genome sequence of Methanobacterium thermoautotrophicum deltaH: functional analysis and comparative genomics.</title>
        <authorList>
            <person name="Smith D.R."/>
            <person name="Doucette-Stamm L.A."/>
            <person name="Deloughery C."/>
            <person name="Lee H.-M."/>
            <person name="Dubois J."/>
            <person name="Aldredge T."/>
            <person name="Bashirzadeh R."/>
            <person name="Blakely D."/>
            <person name="Cook R."/>
            <person name="Gilbert K."/>
            <person name="Harrison D."/>
            <person name="Hoang L."/>
            <person name="Keagle P."/>
            <person name="Lumm W."/>
            <person name="Pothier B."/>
            <person name="Qiu D."/>
            <person name="Spadafora R."/>
            <person name="Vicare R."/>
            <person name="Wang Y."/>
            <person name="Wierzbowski J."/>
            <person name="Gibson R."/>
            <person name="Jiwani N."/>
            <person name="Caruso A."/>
            <person name="Bush D."/>
            <person name="Safer H."/>
            <person name="Patwell D."/>
            <person name="Prabhakar S."/>
            <person name="McDougall S."/>
            <person name="Shimer G."/>
            <person name="Goyal A."/>
            <person name="Pietrovski S."/>
            <person name="Church G.M."/>
            <person name="Daniels C.J."/>
            <person name="Mao J.-I."/>
            <person name="Rice P."/>
            <person name="Noelling J."/>
            <person name="Reeve J.N."/>
        </authorList>
    </citation>
    <scope>NUCLEOTIDE SEQUENCE [LARGE SCALE GENOMIC DNA]</scope>
    <source>
        <strain>ATCC 29096 / DSM 1053 / JCM 10044 / NBRC 100330 / Delta H</strain>
    </source>
</reference>
<organism>
    <name type="scientific">Methanothermobacter thermautotrophicus (strain ATCC 29096 / DSM 1053 / JCM 10044 / NBRC 100330 / Delta H)</name>
    <name type="common">Methanobacterium thermoautotrophicum</name>
    <dbReference type="NCBI Taxonomy" id="187420"/>
    <lineage>
        <taxon>Archaea</taxon>
        <taxon>Methanobacteriati</taxon>
        <taxon>Methanobacteriota</taxon>
        <taxon>Methanomada group</taxon>
        <taxon>Methanobacteria</taxon>
        <taxon>Methanobacteriales</taxon>
        <taxon>Methanobacteriaceae</taxon>
        <taxon>Methanothermobacter</taxon>
    </lineage>
</organism>
<comment type="function">
    <text evidence="1">Involved in targeting and insertion of nascent membrane proteins into the cytoplasmic membrane. Binds to the hydrophobic signal sequence of the ribosome-nascent chain (RNC) as it emerges from the ribosomes. The SRP-RNC complex is then targeted to the cytoplasmic membrane where it interacts with the SRP receptor FtsY.</text>
</comment>
<comment type="catalytic activity">
    <reaction evidence="1">
        <text>GTP + H2O = GDP + phosphate + H(+)</text>
        <dbReference type="Rhea" id="RHEA:19669"/>
        <dbReference type="ChEBI" id="CHEBI:15377"/>
        <dbReference type="ChEBI" id="CHEBI:15378"/>
        <dbReference type="ChEBI" id="CHEBI:37565"/>
        <dbReference type="ChEBI" id="CHEBI:43474"/>
        <dbReference type="ChEBI" id="CHEBI:58189"/>
        <dbReference type="EC" id="3.6.5.4"/>
    </reaction>
</comment>
<comment type="subunit">
    <text evidence="1">Part of the signal recognition particle protein translocation system, which is composed of SRP and FtsY. Archaeal SRP consists of a 7S RNA molecule of 300 nucleotides and two protein subunits: SRP54 and SRP19.</text>
</comment>
<comment type="subcellular location">
    <subcellularLocation>
        <location evidence="1">Cytoplasm</location>
    </subcellularLocation>
    <text evidence="1">The SRP-RNC complex is targeted to the cytoplasmic membrane.</text>
</comment>
<comment type="domain">
    <text evidence="1">Composed of three domains: the N-terminal N domain, which is responsible for interactions with the ribosome, the central G domain, which binds GTP, and the C-terminal M domain, which binds the RNA and the signal sequence of the RNC.</text>
</comment>
<comment type="similarity">
    <text evidence="1">Belongs to the GTP-binding SRP family. SRP54 subfamily.</text>
</comment>
<protein>
    <recommendedName>
        <fullName evidence="1">Signal recognition particle 54 kDa protein</fullName>
        <shortName evidence="1">SRP54</shortName>
        <ecNumber evidence="1">3.6.5.4</ecNumber>
    </recommendedName>
</protein>
<name>SRP54_METTH</name>